<reference key="1">
    <citation type="submission" date="2008-10" db="EMBL/GenBank/DDBJ databases">
        <title>Genome sequence of Clostridium botulinum A2 Kyoto.</title>
        <authorList>
            <person name="Shrivastava S."/>
            <person name="Brinkac L.M."/>
            <person name="Brown J.L."/>
            <person name="Bruce D."/>
            <person name="Detter C.C."/>
            <person name="Johnson E.A."/>
            <person name="Munk C.A."/>
            <person name="Smith L.A."/>
            <person name="Smith T.J."/>
            <person name="Sutton G."/>
            <person name="Brettin T.S."/>
        </authorList>
    </citation>
    <scope>NUCLEOTIDE SEQUENCE [LARGE SCALE GENOMIC DNA]</scope>
    <source>
        <strain>Kyoto / Type A2</strain>
    </source>
</reference>
<dbReference type="EC" id="3.1.3.71" evidence="1"/>
<dbReference type="EMBL" id="CP001581">
    <property type="protein sequence ID" value="ACO85207.1"/>
    <property type="molecule type" value="Genomic_DNA"/>
</dbReference>
<dbReference type="RefSeq" id="WP_003359386.1">
    <property type="nucleotide sequence ID" value="NC_012563.1"/>
</dbReference>
<dbReference type="SMR" id="C1FNF9"/>
<dbReference type="KEGG" id="cby:CLM_4046"/>
<dbReference type="eggNOG" id="COG2045">
    <property type="taxonomic scope" value="Bacteria"/>
</dbReference>
<dbReference type="HOGENOM" id="CLU_070028_0_0_9"/>
<dbReference type="Proteomes" id="UP000001374">
    <property type="component" value="Chromosome"/>
</dbReference>
<dbReference type="GO" id="GO:0050532">
    <property type="term" value="F:2-phosphosulfolactate phosphatase activity"/>
    <property type="evidence" value="ECO:0007669"/>
    <property type="project" value="UniProtKB-UniRule"/>
</dbReference>
<dbReference type="GO" id="GO:0000287">
    <property type="term" value="F:magnesium ion binding"/>
    <property type="evidence" value="ECO:0007669"/>
    <property type="project" value="UniProtKB-UniRule"/>
</dbReference>
<dbReference type="GO" id="GO:0050545">
    <property type="term" value="F:sulfopyruvate decarboxylase activity"/>
    <property type="evidence" value="ECO:0007669"/>
    <property type="project" value="TreeGrafter"/>
</dbReference>
<dbReference type="FunFam" id="3.90.1560.10:FF:000001">
    <property type="entry name" value="Probable 2-phosphosulfolactate phosphatase"/>
    <property type="match status" value="1"/>
</dbReference>
<dbReference type="Gene3D" id="3.90.1560.10">
    <property type="entry name" value="ComB-like"/>
    <property type="match status" value="1"/>
</dbReference>
<dbReference type="HAMAP" id="MF_00490">
    <property type="entry name" value="ComB"/>
    <property type="match status" value="1"/>
</dbReference>
<dbReference type="InterPro" id="IPR005238">
    <property type="entry name" value="ComB-like"/>
</dbReference>
<dbReference type="InterPro" id="IPR036702">
    <property type="entry name" value="ComB-like_sf"/>
</dbReference>
<dbReference type="NCBIfam" id="NF002052">
    <property type="entry name" value="PRK00886.1-1"/>
    <property type="match status" value="1"/>
</dbReference>
<dbReference type="NCBIfam" id="NF002055">
    <property type="entry name" value="PRK00886.1-4"/>
    <property type="match status" value="1"/>
</dbReference>
<dbReference type="PANTHER" id="PTHR37311">
    <property type="entry name" value="2-PHOSPHOSULFOLACTATE PHOSPHATASE-RELATED"/>
    <property type="match status" value="1"/>
</dbReference>
<dbReference type="PANTHER" id="PTHR37311:SF1">
    <property type="entry name" value="2-PHOSPHOSULFOLACTATE PHOSPHATASE-RELATED"/>
    <property type="match status" value="1"/>
</dbReference>
<dbReference type="Pfam" id="PF04029">
    <property type="entry name" value="2-ph_phosp"/>
    <property type="match status" value="1"/>
</dbReference>
<dbReference type="SUPFAM" id="SSF142823">
    <property type="entry name" value="ComB-like"/>
    <property type="match status" value="1"/>
</dbReference>
<evidence type="ECO:0000255" key="1">
    <source>
        <dbReference type="HAMAP-Rule" id="MF_00490"/>
    </source>
</evidence>
<proteinExistence type="inferred from homology"/>
<gene>
    <name evidence="1" type="primary">comB</name>
    <name type="ordered locus">CLM_4046</name>
</gene>
<keyword id="KW-0378">Hydrolase</keyword>
<keyword id="KW-0460">Magnesium</keyword>
<organism>
    <name type="scientific">Clostridium botulinum (strain Kyoto / Type A2)</name>
    <dbReference type="NCBI Taxonomy" id="536232"/>
    <lineage>
        <taxon>Bacteria</taxon>
        <taxon>Bacillati</taxon>
        <taxon>Bacillota</taxon>
        <taxon>Clostridia</taxon>
        <taxon>Eubacteriales</taxon>
        <taxon>Clostridiaceae</taxon>
        <taxon>Clostridium</taxon>
    </lineage>
</organism>
<protein>
    <recommendedName>
        <fullName evidence="1">Probable 2-phosphosulfolactate phosphatase</fullName>
        <ecNumber evidence="1">3.1.3.71</ecNumber>
    </recommendedName>
</protein>
<comment type="catalytic activity">
    <reaction evidence="1">
        <text>(2R)-O-phospho-3-sulfolactate + H2O = (2R)-3-sulfolactate + phosphate</text>
        <dbReference type="Rhea" id="RHEA:23416"/>
        <dbReference type="ChEBI" id="CHEBI:15377"/>
        <dbReference type="ChEBI" id="CHEBI:15597"/>
        <dbReference type="ChEBI" id="CHEBI:43474"/>
        <dbReference type="ChEBI" id="CHEBI:58738"/>
        <dbReference type="EC" id="3.1.3.71"/>
    </reaction>
</comment>
<comment type="cofactor">
    <cofactor evidence="1">
        <name>Mg(2+)</name>
        <dbReference type="ChEBI" id="CHEBI:18420"/>
    </cofactor>
</comment>
<comment type="similarity">
    <text evidence="1">Belongs to the ComB family.</text>
</comment>
<name>COMB_CLOBJ</name>
<sequence>MNIDIVISADHIDEKRLINKTVIIIDILRATSVITTAINNGCKKVIPVLTVEEAKDIAKNSKEDIILGGERNALKIDGFNFSNSPLEYTKKYVEGKTVVLSTTNGTRAINNSFNAKTILISALINSKATAKAIDKLNEDLIIINSGTNGQFSIDDFICSGYLIDCLYNIRKDLELSDIAKTAHYIYTNNKDIESFVKKATHYSRLKSLNLEKDLEYCFQKDIIDVVPQYKDGYIIKSNI</sequence>
<feature type="chain" id="PRO_1000189623" description="Probable 2-phosphosulfolactate phosphatase">
    <location>
        <begin position="1"/>
        <end position="239"/>
    </location>
</feature>
<accession>C1FNF9</accession>